<sequence length="518" mass="61624">MEEFKGYFELDRSRQHDFLYPLLFREYIYALAHDHGLNRSILFKNAGYDKKSSSIVVKRLITRMYQQNPLIFSANDSIQNPFFGHNKNLYSQIISEGFAVIVEIPFSFSLRLVSSLERKEIAKSHNLRSIHSIFPFLEDKFSHLDYVSDVLIPYHIHLEILVQTLRYWVKDASSLHLLRFFLHEYWNSLITPKKHITLFSKGNPRLFLFLYNSHICEYESTFLFLRNQSSHLRSTSSGIFFERIYFYVKIEHFAKVFFDNDFQCILWFFKDPFMHYVRYQGKSILGSKDTPLLMNKWKYYLVTLWQYHFYAWFQPGRIDINQLCKYSLDFLGYRSSVPLNSSVVRSQMLENSFLINNAMKKFETIVPIIPLIGSLSKANFCNTLGHPISKPTRADSSDSDIIDRFLRICRNLSHYHSGSSKKKSLYRVKYILRLSCVKTLARKHKRTVRTFFKRLGSEFLEEFLTEEEVVLSLIFPRTYSTSRRLYRGQIWYLDITSINDLVNYENDWLLDHGNVNYL</sequence>
<keyword id="KW-0150">Chloroplast</keyword>
<keyword id="KW-0507">mRNA processing</keyword>
<keyword id="KW-0934">Plastid</keyword>
<keyword id="KW-0694">RNA-binding</keyword>
<keyword id="KW-0819">tRNA processing</keyword>
<feature type="chain" id="PRO_0000143728" description="Maturase K">
    <location>
        <begin position="1"/>
        <end position="518"/>
    </location>
</feature>
<name>MATK_SYZCU</name>
<reference key="1">
    <citation type="journal article" date="2005" name="Plant Syst. Evol.">
        <title>Relationships within Myrtaceae sensu lato based on a matK phylogeny.</title>
        <authorList>
            <person name="Wilson P.G."/>
            <person name="O'Brien M.M."/>
            <person name="Heslewood M.M."/>
            <person name="Quinn C.J."/>
        </authorList>
    </citation>
    <scope>NUCLEOTIDE SEQUENCE [GENOMIC DNA]</scope>
</reference>
<evidence type="ECO:0000255" key="1">
    <source>
        <dbReference type="HAMAP-Rule" id="MF_01390"/>
    </source>
</evidence>
<dbReference type="EMBL" id="AY525140">
    <property type="protein sequence ID" value="AAS98236.1"/>
    <property type="molecule type" value="Genomic_DNA"/>
</dbReference>
<dbReference type="GO" id="GO:0009507">
    <property type="term" value="C:chloroplast"/>
    <property type="evidence" value="ECO:0007669"/>
    <property type="project" value="UniProtKB-SubCell"/>
</dbReference>
<dbReference type="GO" id="GO:0003723">
    <property type="term" value="F:RNA binding"/>
    <property type="evidence" value="ECO:0007669"/>
    <property type="project" value="UniProtKB-KW"/>
</dbReference>
<dbReference type="GO" id="GO:0006397">
    <property type="term" value="P:mRNA processing"/>
    <property type="evidence" value="ECO:0007669"/>
    <property type="project" value="UniProtKB-KW"/>
</dbReference>
<dbReference type="GO" id="GO:0008380">
    <property type="term" value="P:RNA splicing"/>
    <property type="evidence" value="ECO:0007669"/>
    <property type="project" value="UniProtKB-UniRule"/>
</dbReference>
<dbReference type="GO" id="GO:0008033">
    <property type="term" value="P:tRNA processing"/>
    <property type="evidence" value="ECO:0007669"/>
    <property type="project" value="UniProtKB-KW"/>
</dbReference>
<dbReference type="HAMAP" id="MF_01390">
    <property type="entry name" value="MatK"/>
    <property type="match status" value="1"/>
</dbReference>
<dbReference type="InterPro" id="IPR024937">
    <property type="entry name" value="Domain_X"/>
</dbReference>
<dbReference type="InterPro" id="IPR002866">
    <property type="entry name" value="Maturase_MatK"/>
</dbReference>
<dbReference type="InterPro" id="IPR024942">
    <property type="entry name" value="Maturase_MatK_N"/>
</dbReference>
<dbReference type="PANTHER" id="PTHR34811">
    <property type="entry name" value="MATURASE K"/>
    <property type="match status" value="1"/>
</dbReference>
<dbReference type="PANTHER" id="PTHR34811:SF1">
    <property type="entry name" value="MATURASE K"/>
    <property type="match status" value="1"/>
</dbReference>
<dbReference type="Pfam" id="PF01348">
    <property type="entry name" value="Intron_maturas2"/>
    <property type="match status" value="1"/>
</dbReference>
<dbReference type="Pfam" id="PF01824">
    <property type="entry name" value="MatK_N"/>
    <property type="match status" value="1"/>
</dbReference>
<gene>
    <name evidence="1" type="primary">matK</name>
</gene>
<geneLocation type="chloroplast"/>
<proteinExistence type="inferred from homology"/>
<accession>Q5GIQ5</accession>
<organism>
    <name type="scientific">Syzygium cumini</name>
    <name type="common">Java plum</name>
    <name type="synonym">Eugenia cumini</name>
    <dbReference type="NCBI Taxonomy" id="260142"/>
    <lineage>
        <taxon>Eukaryota</taxon>
        <taxon>Viridiplantae</taxon>
        <taxon>Streptophyta</taxon>
        <taxon>Embryophyta</taxon>
        <taxon>Tracheophyta</taxon>
        <taxon>Spermatophyta</taxon>
        <taxon>Magnoliopsida</taxon>
        <taxon>eudicotyledons</taxon>
        <taxon>Gunneridae</taxon>
        <taxon>Pentapetalae</taxon>
        <taxon>rosids</taxon>
        <taxon>malvids</taxon>
        <taxon>Myrtales</taxon>
        <taxon>Myrtaceae</taxon>
        <taxon>Myrtoideae</taxon>
        <taxon>Syzygieae</taxon>
        <taxon>Syzygium</taxon>
    </lineage>
</organism>
<comment type="function">
    <text evidence="1">Usually encoded in the trnK tRNA gene intron. Probably assists in splicing its own and other chloroplast group II introns.</text>
</comment>
<comment type="subcellular location">
    <subcellularLocation>
        <location>Plastid</location>
        <location>Chloroplast</location>
    </subcellularLocation>
</comment>
<comment type="similarity">
    <text evidence="1">Belongs to the intron maturase 2 family. MatK subfamily.</text>
</comment>
<protein>
    <recommendedName>
        <fullName evidence="1">Maturase K</fullName>
    </recommendedName>
    <alternativeName>
        <fullName evidence="1">Intron maturase</fullName>
    </alternativeName>
</protein>